<name>RF1_LACP3</name>
<protein>
    <recommendedName>
        <fullName evidence="1">Peptide chain release factor 1</fullName>
        <shortName evidence="1">RF-1</shortName>
    </recommendedName>
</protein>
<sequence length="359" mass="40963">MDKIFEQLDGLLDRYEELQELMSDPEVISDTKRYLALSKEEGGMRDVVAAYKKYKQVLSDIKESEEVLRESKDDDMEALAKEDLEDLQKQKADLEDQIKVLMLPKDPNDDKNIIMEIRGAAGGDEASLFAGDLLNMYMHYAERQGWKTEIIDATPTEVGGYKEVVVMITGDNVYSKLKYENGAHRVQRVPVTESAGRVHTSTATVGVMPEYDEVDLKIDPKDIRTDVYRSSGAGGQHVNKTSSAVRMTHIPSGIVVSMQDERSQQENRARAMQILRSRVYDYYETQNQEKYDQNRKNAIGTGDRSERIRTYNYPQNRVTDHRIGLTLNKLDRIMNGELDEIIDALIVHDQAQKMESLNV</sequence>
<feature type="chain" id="PRO_1000004901" description="Peptide chain release factor 1">
    <location>
        <begin position="1"/>
        <end position="359"/>
    </location>
</feature>
<feature type="modified residue" description="N5-methylglutamine" evidence="1">
    <location>
        <position position="236"/>
    </location>
</feature>
<keyword id="KW-0963">Cytoplasm</keyword>
<keyword id="KW-0488">Methylation</keyword>
<keyword id="KW-0648">Protein biosynthesis</keyword>
<keyword id="KW-1185">Reference proteome</keyword>
<evidence type="ECO:0000255" key="1">
    <source>
        <dbReference type="HAMAP-Rule" id="MF_00093"/>
    </source>
</evidence>
<accession>Q03A29</accession>
<organism>
    <name type="scientific">Lacticaseibacillus paracasei (strain ATCC 334 / BCRC 17002 / CCUG 31169 / CIP 107868 / KCTC 3260 / NRRL B-441)</name>
    <name type="common">Lactobacillus paracasei</name>
    <dbReference type="NCBI Taxonomy" id="321967"/>
    <lineage>
        <taxon>Bacteria</taxon>
        <taxon>Bacillati</taxon>
        <taxon>Bacillota</taxon>
        <taxon>Bacilli</taxon>
        <taxon>Lactobacillales</taxon>
        <taxon>Lactobacillaceae</taxon>
        <taxon>Lacticaseibacillus</taxon>
    </lineage>
</organism>
<comment type="function">
    <text evidence="1">Peptide chain release factor 1 directs the termination of translation in response to the peptide chain termination codons UAG and UAA.</text>
</comment>
<comment type="subcellular location">
    <subcellularLocation>
        <location evidence="1">Cytoplasm</location>
    </subcellularLocation>
</comment>
<comment type="PTM">
    <text evidence="1">Methylated by PrmC. Methylation increases the termination efficiency of RF1.</text>
</comment>
<comment type="similarity">
    <text evidence="1">Belongs to the prokaryotic/mitochondrial release factor family.</text>
</comment>
<reference key="1">
    <citation type="journal article" date="2006" name="Proc. Natl. Acad. Sci. U.S.A.">
        <title>Comparative genomics of the lactic acid bacteria.</title>
        <authorList>
            <person name="Makarova K.S."/>
            <person name="Slesarev A."/>
            <person name="Wolf Y.I."/>
            <person name="Sorokin A."/>
            <person name="Mirkin B."/>
            <person name="Koonin E.V."/>
            <person name="Pavlov A."/>
            <person name="Pavlova N."/>
            <person name="Karamychev V."/>
            <person name="Polouchine N."/>
            <person name="Shakhova V."/>
            <person name="Grigoriev I."/>
            <person name="Lou Y."/>
            <person name="Rohksar D."/>
            <person name="Lucas S."/>
            <person name="Huang K."/>
            <person name="Goodstein D.M."/>
            <person name="Hawkins T."/>
            <person name="Plengvidhya V."/>
            <person name="Welker D."/>
            <person name="Hughes J."/>
            <person name="Goh Y."/>
            <person name="Benson A."/>
            <person name="Baldwin K."/>
            <person name="Lee J.-H."/>
            <person name="Diaz-Muniz I."/>
            <person name="Dosti B."/>
            <person name="Smeianov V."/>
            <person name="Wechter W."/>
            <person name="Barabote R."/>
            <person name="Lorca G."/>
            <person name="Altermann E."/>
            <person name="Barrangou R."/>
            <person name="Ganesan B."/>
            <person name="Xie Y."/>
            <person name="Rawsthorne H."/>
            <person name="Tamir D."/>
            <person name="Parker C."/>
            <person name="Breidt F."/>
            <person name="Broadbent J.R."/>
            <person name="Hutkins R."/>
            <person name="O'Sullivan D."/>
            <person name="Steele J."/>
            <person name="Unlu G."/>
            <person name="Saier M.H. Jr."/>
            <person name="Klaenhammer T."/>
            <person name="Richardson P."/>
            <person name="Kozyavkin S."/>
            <person name="Weimer B.C."/>
            <person name="Mills D.A."/>
        </authorList>
    </citation>
    <scope>NUCLEOTIDE SEQUENCE [LARGE SCALE GENOMIC DNA]</scope>
    <source>
        <strain>ATCC 334 / BCRC 17002 / CCUG 31169 / CIP 107868 / KCTC 3260 / NRRL B-441</strain>
    </source>
</reference>
<proteinExistence type="inferred from homology"/>
<dbReference type="EMBL" id="CP000423">
    <property type="protein sequence ID" value="ABJ69943.1"/>
    <property type="molecule type" value="Genomic_DNA"/>
</dbReference>
<dbReference type="RefSeq" id="WP_003564946.1">
    <property type="nucleotide sequence ID" value="NC_008526.1"/>
</dbReference>
<dbReference type="RefSeq" id="YP_806385.1">
    <property type="nucleotide sequence ID" value="NC_008526.1"/>
</dbReference>
<dbReference type="SMR" id="Q03A29"/>
<dbReference type="STRING" id="321967.LSEI_1155"/>
<dbReference type="PaxDb" id="321967-LSEI_1155"/>
<dbReference type="GeneID" id="57089849"/>
<dbReference type="KEGG" id="lca:LSEI_1155"/>
<dbReference type="PATRIC" id="fig|321967.11.peg.1128"/>
<dbReference type="HOGENOM" id="CLU_036856_0_1_9"/>
<dbReference type="Proteomes" id="UP000001651">
    <property type="component" value="Chromosome"/>
</dbReference>
<dbReference type="GO" id="GO:0005737">
    <property type="term" value="C:cytoplasm"/>
    <property type="evidence" value="ECO:0007669"/>
    <property type="project" value="UniProtKB-SubCell"/>
</dbReference>
<dbReference type="GO" id="GO:0016149">
    <property type="term" value="F:translation release factor activity, codon specific"/>
    <property type="evidence" value="ECO:0007669"/>
    <property type="project" value="UniProtKB-UniRule"/>
</dbReference>
<dbReference type="FunFam" id="3.30.160.20:FF:000004">
    <property type="entry name" value="Peptide chain release factor 1"/>
    <property type="match status" value="1"/>
</dbReference>
<dbReference type="FunFam" id="3.30.70.1660:FF:000002">
    <property type="entry name" value="Peptide chain release factor 1"/>
    <property type="match status" value="1"/>
</dbReference>
<dbReference type="FunFam" id="3.30.70.1660:FF:000004">
    <property type="entry name" value="Peptide chain release factor 1"/>
    <property type="match status" value="1"/>
</dbReference>
<dbReference type="Gene3D" id="3.30.160.20">
    <property type="match status" value="1"/>
</dbReference>
<dbReference type="Gene3D" id="3.30.70.1660">
    <property type="match status" value="1"/>
</dbReference>
<dbReference type="Gene3D" id="6.10.140.1950">
    <property type="match status" value="1"/>
</dbReference>
<dbReference type="HAMAP" id="MF_00093">
    <property type="entry name" value="Rel_fac_1"/>
    <property type="match status" value="1"/>
</dbReference>
<dbReference type="InterPro" id="IPR005139">
    <property type="entry name" value="PCRF"/>
</dbReference>
<dbReference type="InterPro" id="IPR000352">
    <property type="entry name" value="Pep_chain_release_fac_I"/>
</dbReference>
<dbReference type="InterPro" id="IPR045853">
    <property type="entry name" value="Pep_chain_release_fac_I_sf"/>
</dbReference>
<dbReference type="InterPro" id="IPR050057">
    <property type="entry name" value="Prokaryotic/Mito_RF"/>
</dbReference>
<dbReference type="InterPro" id="IPR004373">
    <property type="entry name" value="RF-1"/>
</dbReference>
<dbReference type="NCBIfam" id="TIGR00019">
    <property type="entry name" value="prfA"/>
    <property type="match status" value="1"/>
</dbReference>
<dbReference type="NCBIfam" id="NF001859">
    <property type="entry name" value="PRK00591.1"/>
    <property type="match status" value="1"/>
</dbReference>
<dbReference type="PANTHER" id="PTHR43804">
    <property type="entry name" value="LD18447P"/>
    <property type="match status" value="1"/>
</dbReference>
<dbReference type="PANTHER" id="PTHR43804:SF7">
    <property type="entry name" value="LD18447P"/>
    <property type="match status" value="1"/>
</dbReference>
<dbReference type="Pfam" id="PF03462">
    <property type="entry name" value="PCRF"/>
    <property type="match status" value="1"/>
</dbReference>
<dbReference type="Pfam" id="PF00472">
    <property type="entry name" value="RF-1"/>
    <property type="match status" value="1"/>
</dbReference>
<dbReference type="SMART" id="SM00937">
    <property type="entry name" value="PCRF"/>
    <property type="match status" value="1"/>
</dbReference>
<dbReference type="SUPFAM" id="SSF75620">
    <property type="entry name" value="Release factor"/>
    <property type="match status" value="1"/>
</dbReference>
<dbReference type="PROSITE" id="PS00745">
    <property type="entry name" value="RF_PROK_I"/>
    <property type="match status" value="1"/>
</dbReference>
<gene>
    <name evidence="1" type="primary">prfA</name>
    <name type="ordered locus">LSEI_1155</name>
</gene>